<gene>
    <name evidence="5" type="primary">decr-1.3</name>
    <name evidence="5" type="ORF">T05C12.3</name>
</gene>
<dbReference type="EC" id="1.3.1.124" evidence="1"/>
<dbReference type="EMBL" id="Z66500">
    <property type="protein sequence ID" value="CAA91310.1"/>
    <property type="molecule type" value="Genomic_DNA"/>
</dbReference>
<dbReference type="PIR" id="T24510">
    <property type="entry name" value="T24510"/>
</dbReference>
<dbReference type="RefSeq" id="NP_495714.1">
    <property type="nucleotide sequence ID" value="NM_063313.3"/>
</dbReference>
<dbReference type="SMR" id="Q22230"/>
<dbReference type="BioGRID" id="39645">
    <property type="interactions" value="2"/>
</dbReference>
<dbReference type="FunCoup" id="Q22230">
    <property type="interactions" value="1156"/>
</dbReference>
<dbReference type="STRING" id="6239.T05C12.3.1"/>
<dbReference type="PaxDb" id="6239-T05C12.3"/>
<dbReference type="PeptideAtlas" id="Q22230"/>
<dbReference type="EnsemblMetazoa" id="T05C12.3.1">
    <property type="protein sequence ID" value="T05C12.3.1"/>
    <property type="gene ID" value="WBGene00011467"/>
</dbReference>
<dbReference type="GeneID" id="174316"/>
<dbReference type="KEGG" id="cel:CELE_T05C12.3"/>
<dbReference type="UCSC" id="T05C12.3">
    <property type="organism name" value="c. elegans"/>
</dbReference>
<dbReference type="AGR" id="WB:WBGene00011467"/>
<dbReference type="CTD" id="174316"/>
<dbReference type="WormBase" id="T05C12.3">
    <property type="protein sequence ID" value="CE02315"/>
    <property type="gene ID" value="WBGene00011467"/>
    <property type="gene designation" value="decr-1.3"/>
</dbReference>
<dbReference type="eggNOG" id="KOG0725">
    <property type="taxonomic scope" value="Eukaryota"/>
</dbReference>
<dbReference type="GeneTree" id="ENSGT00940000153801"/>
<dbReference type="HOGENOM" id="CLU_010194_1_2_1"/>
<dbReference type="InParanoid" id="Q22230"/>
<dbReference type="OMA" id="ILTTWVW"/>
<dbReference type="OrthoDB" id="1888931at2759"/>
<dbReference type="PhylomeDB" id="Q22230"/>
<dbReference type="Reactome" id="R-CEL-77288">
    <property type="pathway name" value="mitochondrial fatty acid beta-oxidation of unsaturated fatty acids"/>
</dbReference>
<dbReference type="PRO" id="PR:Q22230"/>
<dbReference type="Proteomes" id="UP000001940">
    <property type="component" value="Chromosome II"/>
</dbReference>
<dbReference type="Bgee" id="WBGene00011467">
    <property type="expression patterns" value="Expressed in adult organism and 1 other cell type or tissue"/>
</dbReference>
<dbReference type="GO" id="GO:0005739">
    <property type="term" value="C:mitochondrion"/>
    <property type="evidence" value="ECO:0000318"/>
    <property type="project" value="GO_Central"/>
</dbReference>
<dbReference type="GO" id="GO:0008670">
    <property type="term" value="F:2,4-dienoyl-CoA reductase (NADPH) activity"/>
    <property type="evidence" value="ECO:0000318"/>
    <property type="project" value="GO_Central"/>
</dbReference>
<dbReference type="GO" id="GO:0006635">
    <property type="term" value="P:fatty acid beta-oxidation"/>
    <property type="evidence" value="ECO:0000318"/>
    <property type="project" value="GO_Central"/>
</dbReference>
<dbReference type="CDD" id="cd05369">
    <property type="entry name" value="TER_DECR_SDR_a"/>
    <property type="match status" value="1"/>
</dbReference>
<dbReference type="FunFam" id="3.40.50.720:FF:000084">
    <property type="entry name" value="Short-chain dehydrogenase reductase"/>
    <property type="match status" value="1"/>
</dbReference>
<dbReference type="Gene3D" id="3.40.50.720">
    <property type="entry name" value="NAD(P)-binding Rossmann-like Domain"/>
    <property type="match status" value="1"/>
</dbReference>
<dbReference type="InterPro" id="IPR036291">
    <property type="entry name" value="NAD(P)-bd_dom_sf"/>
</dbReference>
<dbReference type="InterPro" id="IPR002347">
    <property type="entry name" value="SDR_fam"/>
</dbReference>
<dbReference type="PANTHER" id="PTHR43658:SF8">
    <property type="entry name" value="17-BETA-HYDROXYSTEROID DEHYDROGENASE 14-RELATED"/>
    <property type="match status" value="1"/>
</dbReference>
<dbReference type="PANTHER" id="PTHR43658">
    <property type="entry name" value="SHORT-CHAIN DEHYDROGENASE/REDUCTASE"/>
    <property type="match status" value="1"/>
</dbReference>
<dbReference type="Pfam" id="PF13561">
    <property type="entry name" value="adh_short_C2"/>
    <property type="match status" value="1"/>
</dbReference>
<dbReference type="PRINTS" id="PR00081">
    <property type="entry name" value="GDHRDH"/>
</dbReference>
<dbReference type="SUPFAM" id="SSF51735">
    <property type="entry name" value="NAD(P)-binding Rossmann-fold domains"/>
    <property type="match status" value="1"/>
</dbReference>
<accession>Q22230</accession>
<evidence type="ECO:0000250" key="1">
    <source>
        <dbReference type="UniProtKB" id="Q16698"/>
    </source>
</evidence>
<evidence type="ECO:0000250" key="2">
    <source>
        <dbReference type="UniProtKB" id="Q9NUI1"/>
    </source>
</evidence>
<evidence type="ECO:0000255" key="3"/>
<evidence type="ECO:0000305" key="4"/>
<evidence type="ECO:0000312" key="5">
    <source>
        <dbReference type="WormBase" id="T05C12.3"/>
    </source>
</evidence>
<proteinExistence type="inferred from homology"/>
<name>DECR_CAEEL</name>
<feature type="chain" id="PRO_0000054880" description="Probable 2,4-dienoyl-CoA reductase 3 [(3E)-enoyl-CoA-producing]" evidence="4">
    <location>
        <begin position="1"/>
        <end position="309"/>
    </location>
</feature>
<feature type="active site" description="Proton acceptor" evidence="3">
    <location>
        <position position="166"/>
    </location>
</feature>
<feature type="binding site" evidence="1">
    <location>
        <begin position="32"/>
        <end position="37"/>
    </location>
    <ligand>
        <name>NADP(+)</name>
        <dbReference type="ChEBI" id="CHEBI:58349"/>
    </ligand>
</feature>
<feature type="binding site" evidence="1">
    <location>
        <position position="57"/>
    </location>
    <ligand>
        <name>NADP(+)</name>
        <dbReference type="ChEBI" id="CHEBI:58349"/>
    </ligand>
</feature>
<feature type="binding site" evidence="2">
    <location>
        <position position="57"/>
    </location>
    <ligand>
        <name>substrate</name>
    </ligand>
</feature>
<feature type="binding site" evidence="1">
    <location>
        <position position="83"/>
    </location>
    <ligand>
        <name>NADP(+)</name>
        <dbReference type="ChEBI" id="CHEBI:58349"/>
    </ligand>
</feature>
<feature type="binding site" evidence="1">
    <location>
        <position position="116"/>
    </location>
    <ligand>
        <name>substrate</name>
    </ligand>
</feature>
<feature type="binding site" evidence="1">
    <location>
        <position position="124"/>
    </location>
    <ligand>
        <name>substrate</name>
    </ligand>
</feature>
<feature type="binding site" evidence="1">
    <location>
        <position position="181"/>
    </location>
    <ligand>
        <name>NADP(+)</name>
        <dbReference type="ChEBI" id="CHEBI:58349"/>
    </ligand>
</feature>
<feature type="binding site" evidence="1">
    <location>
        <begin position="207"/>
        <end position="210"/>
    </location>
    <ligand>
        <name>NADP(+)</name>
        <dbReference type="ChEBI" id="CHEBI:58349"/>
    </ligand>
</feature>
<feature type="binding site" evidence="2">
    <location>
        <position position="218"/>
    </location>
    <ligand>
        <name>substrate</name>
    </ligand>
</feature>
<protein>
    <recommendedName>
        <fullName evidence="1">Probable 2,4-dienoyl-CoA reductase 3 [(3E)-enoyl-CoA-producing]</fullName>
        <ecNumber evidence="1">1.3.1.124</ecNumber>
    </recommendedName>
</protein>
<reference key="1">
    <citation type="journal article" date="1998" name="Science">
        <title>Genome sequence of the nematode C. elegans: a platform for investigating biology.</title>
        <authorList>
            <consortium name="The C. elegans sequencing consortium"/>
        </authorList>
    </citation>
    <scope>NUCLEOTIDE SEQUENCE [LARGE SCALE GENOMIC DNA]</scope>
    <source>
        <strain>Bristol N2</strain>
    </source>
</reference>
<sequence>MACKNPKKFFPICNSPILRDGALKGKVALVTGGGTGIGKAIATTFAHLGASVAIAARRMEKLEQTAEEIMKTTGGICEPFRMDIKDPGMVSDTFDKIDKKFGKHPDILVNNAAGNFIMATERLSPNAHGTIIDIVLKGTMNVTTELGKRCIQSKTGASVTSITAAYARSGAPFIVPSAVSKAGVEIMTKSLATEWSKYGLRFNAVSPGPIPTKGAWGRLFSGEMGDVAEKMKELNPEGRSGTPEEVANLVAFISSDHMSFMNGVIIDLDGGQQHFNHGSHMGDFLHTWDQDTWGDVENVIRGRTGKEKP</sequence>
<comment type="function">
    <text evidence="1">Auxiliary enzyme of beta-oxidation. It participates in the metabolism of unsaturated fatty enoyl-CoA esters having double bonds in both even- and odd-numbered positions. Catalyzes the NADP-dependent reduction of 2,4-dienoyl-CoA to yield trans-3-enoyl-CoA.</text>
</comment>
<comment type="catalytic activity">
    <reaction evidence="1">
        <text>a (2E,4E)-dienoyl-CoA + NADPH + H(+) = a 4,5-saturated-(3E)-enoyl-CoA + NADP(+)</text>
        <dbReference type="Rhea" id="RHEA:45912"/>
        <dbReference type="ChEBI" id="CHEBI:15378"/>
        <dbReference type="ChEBI" id="CHEBI:57783"/>
        <dbReference type="ChEBI" id="CHEBI:58349"/>
        <dbReference type="ChEBI" id="CHEBI:85101"/>
        <dbReference type="ChEBI" id="CHEBI:85493"/>
        <dbReference type="EC" id="1.3.1.124"/>
    </reaction>
</comment>
<comment type="catalytic activity">
    <reaction evidence="1">
        <text>a (2E,4Z)-dienoyl-CoA + NADPH + H(+) = a 4,5-saturated-(3E)-enoyl-CoA + NADP(+)</text>
        <dbReference type="Rhea" id="RHEA:61892"/>
        <dbReference type="ChEBI" id="CHEBI:15378"/>
        <dbReference type="ChEBI" id="CHEBI:57783"/>
        <dbReference type="ChEBI" id="CHEBI:58349"/>
        <dbReference type="ChEBI" id="CHEBI:85099"/>
        <dbReference type="ChEBI" id="CHEBI:85493"/>
        <dbReference type="EC" id="1.3.1.124"/>
    </reaction>
</comment>
<comment type="similarity">
    <text evidence="4">Belongs to the short-chain dehydrogenases/reductases (SDR) family. 2,4-dienoyl-CoA reductase subfamily.</text>
</comment>
<organism>
    <name type="scientific">Caenorhabditis elegans</name>
    <dbReference type="NCBI Taxonomy" id="6239"/>
    <lineage>
        <taxon>Eukaryota</taxon>
        <taxon>Metazoa</taxon>
        <taxon>Ecdysozoa</taxon>
        <taxon>Nematoda</taxon>
        <taxon>Chromadorea</taxon>
        <taxon>Rhabditida</taxon>
        <taxon>Rhabditina</taxon>
        <taxon>Rhabditomorpha</taxon>
        <taxon>Rhabditoidea</taxon>
        <taxon>Rhabditidae</taxon>
        <taxon>Peloderinae</taxon>
        <taxon>Caenorhabditis</taxon>
    </lineage>
</organism>
<keyword id="KW-0521">NADP</keyword>
<keyword id="KW-0560">Oxidoreductase</keyword>
<keyword id="KW-1185">Reference proteome</keyword>